<comment type="subcellular location">
    <subcellularLocation>
        <location>Cytoplasm</location>
    </subcellularLocation>
    <subcellularLocation>
        <location evidence="1">Cell inner membrane</location>
        <topology evidence="1">Peripheral membrane protein</topology>
        <orientation evidence="1">Cytoplasmic side</orientation>
    </subcellularLocation>
</comment>
<comment type="similarity">
    <text evidence="1">Belongs to the HflD family.</text>
</comment>
<name>HFLD_SHEB5</name>
<keyword id="KW-0997">Cell inner membrane</keyword>
<keyword id="KW-1003">Cell membrane</keyword>
<keyword id="KW-0963">Cytoplasm</keyword>
<keyword id="KW-0472">Membrane</keyword>
<keyword id="KW-1185">Reference proteome</keyword>
<accession>A3D5F9</accession>
<protein>
    <recommendedName>
        <fullName evidence="1">High frequency lysogenization protein HflD homolog</fullName>
    </recommendedName>
</protein>
<reference key="1">
    <citation type="submission" date="2007-02" db="EMBL/GenBank/DDBJ databases">
        <title>Complete sequence of chromosome of Shewanella baltica OS155.</title>
        <authorList>
            <consortium name="US DOE Joint Genome Institute"/>
            <person name="Copeland A."/>
            <person name="Lucas S."/>
            <person name="Lapidus A."/>
            <person name="Barry K."/>
            <person name="Detter J.C."/>
            <person name="Glavina del Rio T."/>
            <person name="Hammon N."/>
            <person name="Israni S."/>
            <person name="Dalin E."/>
            <person name="Tice H."/>
            <person name="Pitluck S."/>
            <person name="Sims D.R."/>
            <person name="Brettin T."/>
            <person name="Bruce D."/>
            <person name="Han C."/>
            <person name="Tapia R."/>
            <person name="Brainard J."/>
            <person name="Schmutz J."/>
            <person name="Larimer F."/>
            <person name="Land M."/>
            <person name="Hauser L."/>
            <person name="Kyrpides N."/>
            <person name="Mikhailova N."/>
            <person name="Brettar I."/>
            <person name="Klappenbach J."/>
            <person name="Konstantinidis K."/>
            <person name="Rodrigues J."/>
            <person name="Tiedje J."/>
            <person name="Richardson P."/>
        </authorList>
    </citation>
    <scope>NUCLEOTIDE SEQUENCE [LARGE SCALE GENOMIC DNA]</scope>
    <source>
        <strain>OS155 / ATCC BAA-1091</strain>
    </source>
</reference>
<gene>
    <name evidence="1" type="primary">hflD</name>
    <name type="ordered locus">Sbal_2479</name>
</gene>
<proteinExistence type="inferred from homology"/>
<evidence type="ECO:0000255" key="1">
    <source>
        <dbReference type="HAMAP-Rule" id="MF_00695"/>
    </source>
</evidence>
<sequence>MNEQLVNRTMAFAGILQAIAQVQHLARHGELDNAELAASLNTILVTNPDNTADVYQDKIVLQKGYKLILNQLGDSSQKDVEITRYLVGVLALERKLVRSNSGLGMLAERINQVNRQLHHFAITDEQVIANLASIYSDIISNLGPKIQISGNPVCLQRPIIQQKIRALLLAAMRSAVLWRQLGGKRRHLVFARKAIVDTAKKSLTL</sequence>
<dbReference type="EMBL" id="CP000563">
    <property type="protein sequence ID" value="ABN61972.1"/>
    <property type="molecule type" value="Genomic_DNA"/>
</dbReference>
<dbReference type="RefSeq" id="WP_006086256.1">
    <property type="nucleotide sequence ID" value="NC_009052.1"/>
</dbReference>
<dbReference type="SMR" id="A3D5F9"/>
<dbReference type="STRING" id="325240.Sbal_2479"/>
<dbReference type="GeneID" id="11772688"/>
<dbReference type="KEGG" id="sbl:Sbal_2479"/>
<dbReference type="HOGENOM" id="CLU_098920_0_0_6"/>
<dbReference type="OrthoDB" id="9788031at2"/>
<dbReference type="Proteomes" id="UP000001557">
    <property type="component" value="Chromosome"/>
</dbReference>
<dbReference type="GO" id="GO:0005737">
    <property type="term" value="C:cytoplasm"/>
    <property type="evidence" value="ECO:0007669"/>
    <property type="project" value="UniProtKB-SubCell"/>
</dbReference>
<dbReference type="GO" id="GO:0005886">
    <property type="term" value="C:plasma membrane"/>
    <property type="evidence" value="ECO:0007669"/>
    <property type="project" value="UniProtKB-SubCell"/>
</dbReference>
<dbReference type="FunFam" id="1.10.3890.10:FF:000002">
    <property type="entry name" value="High frequency lysogenization protein HflD homolog"/>
    <property type="match status" value="1"/>
</dbReference>
<dbReference type="Gene3D" id="1.10.3890.10">
    <property type="entry name" value="HflD-like"/>
    <property type="match status" value="1"/>
</dbReference>
<dbReference type="HAMAP" id="MF_00695">
    <property type="entry name" value="HflD_protein"/>
    <property type="match status" value="1"/>
</dbReference>
<dbReference type="InterPro" id="IPR007451">
    <property type="entry name" value="HflD"/>
</dbReference>
<dbReference type="InterPro" id="IPR035932">
    <property type="entry name" value="HflD-like_sf"/>
</dbReference>
<dbReference type="NCBIfam" id="NF001246">
    <property type="entry name" value="PRK00218.1-2"/>
    <property type="match status" value="1"/>
</dbReference>
<dbReference type="NCBIfam" id="NF001248">
    <property type="entry name" value="PRK00218.1-4"/>
    <property type="match status" value="1"/>
</dbReference>
<dbReference type="PANTHER" id="PTHR38100">
    <property type="entry name" value="HIGH FREQUENCY LYSOGENIZATION PROTEIN HFLD"/>
    <property type="match status" value="1"/>
</dbReference>
<dbReference type="PANTHER" id="PTHR38100:SF1">
    <property type="entry name" value="HIGH FREQUENCY LYSOGENIZATION PROTEIN HFLD"/>
    <property type="match status" value="1"/>
</dbReference>
<dbReference type="Pfam" id="PF04356">
    <property type="entry name" value="DUF489"/>
    <property type="match status" value="1"/>
</dbReference>
<dbReference type="SUPFAM" id="SSF101322">
    <property type="entry name" value="YcfC-like"/>
    <property type="match status" value="1"/>
</dbReference>
<organism>
    <name type="scientific">Shewanella baltica (strain OS155 / ATCC BAA-1091)</name>
    <dbReference type="NCBI Taxonomy" id="325240"/>
    <lineage>
        <taxon>Bacteria</taxon>
        <taxon>Pseudomonadati</taxon>
        <taxon>Pseudomonadota</taxon>
        <taxon>Gammaproteobacteria</taxon>
        <taxon>Alteromonadales</taxon>
        <taxon>Shewanellaceae</taxon>
        <taxon>Shewanella</taxon>
    </lineage>
</organism>
<feature type="chain" id="PRO_1000045438" description="High frequency lysogenization protein HflD homolog">
    <location>
        <begin position="1"/>
        <end position="205"/>
    </location>
</feature>